<organism>
    <name type="scientific">Legionella pneumophila (strain Lens)</name>
    <dbReference type="NCBI Taxonomy" id="297245"/>
    <lineage>
        <taxon>Bacteria</taxon>
        <taxon>Pseudomonadati</taxon>
        <taxon>Pseudomonadota</taxon>
        <taxon>Gammaproteobacteria</taxon>
        <taxon>Legionellales</taxon>
        <taxon>Legionellaceae</taxon>
        <taxon>Legionella</taxon>
    </lineage>
</organism>
<evidence type="ECO:0000255" key="1">
    <source>
        <dbReference type="HAMAP-Rule" id="MF_01382"/>
    </source>
</evidence>
<evidence type="ECO:0000256" key="2">
    <source>
        <dbReference type="SAM" id="MobiDB-lite"/>
    </source>
</evidence>
<dbReference type="EC" id="7.4.2.8" evidence="1"/>
<dbReference type="EMBL" id="CR628337">
    <property type="protein sequence ID" value="CAH15805.1"/>
    <property type="molecule type" value="Genomic_DNA"/>
</dbReference>
<dbReference type="RefSeq" id="WP_011215602.1">
    <property type="nucleotide sequence ID" value="NC_006369.1"/>
</dbReference>
<dbReference type="SMR" id="Q5WW88"/>
<dbReference type="KEGG" id="lpf:lpl1565"/>
<dbReference type="LegioList" id="lpl1565"/>
<dbReference type="HOGENOM" id="CLU_005314_3_0_6"/>
<dbReference type="Proteomes" id="UP000002517">
    <property type="component" value="Chromosome"/>
</dbReference>
<dbReference type="GO" id="GO:0031522">
    <property type="term" value="C:cell envelope Sec protein transport complex"/>
    <property type="evidence" value="ECO:0007669"/>
    <property type="project" value="TreeGrafter"/>
</dbReference>
<dbReference type="GO" id="GO:0005829">
    <property type="term" value="C:cytosol"/>
    <property type="evidence" value="ECO:0007669"/>
    <property type="project" value="TreeGrafter"/>
</dbReference>
<dbReference type="GO" id="GO:0005886">
    <property type="term" value="C:plasma membrane"/>
    <property type="evidence" value="ECO:0007669"/>
    <property type="project" value="UniProtKB-SubCell"/>
</dbReference>
<dbReference type="GO" id="GO:0005524">
    <property type="term" value="F:ATP binding"/>
    <property type="evidence" value="ECO:0007669"/>
    <property type="project" value="UniProtKB-UniRule"/>
</dbReference>
<dbReference type="GO" id="GO:0046872">
    <property type="term" value="F:metal ion binding"/>
    <property type="evidence" value="ECO:0007669"/>
    <property type="project" value="UniProtKB-KW"/>
</dbReference>
<dbReference type="GO" id="GO:0008564">
    <property type="term" value="F:protein-exporting ATPase activity"/>
    <property type="evidence" value="ECO:0007669"/>
    <property type="project" value="UniProtKB-EC"/>
</dbReference>
<dbReference type="GO" id="GO:0065002">
    <property type="term" value="P:intracellular protein transmembrane transport"/>
    <property type="evidence" value="ECO:0007669"/>
    <property type="project" value="UniProtKB-UniRule"/>
</dbReference>
<dbReference type="GO" id="GO:0017038">
    <property type="term" value="P:protein import"/>
    <property type="evidence" value="ECO:0007669"/>
    <property type="project" value="InterPro"/>
</dbReference>
<dbReference type="GO" id="GO:0006605">
    <property type="term" value="P:protein targeting"/>
    <property type="evidence" value="ECO:0007669"/>
    <property type="project" value="UniProtKB-UniRule"/>
</dbReference>
<dbReference type="GO" id="GO:0043952">
    <property type="term" value="P:protein transport by the Sec complex"/>
    <property type="evidence" value="ECO:0007669"/>
    <property type="project" value="TreeGrafter"/>
</dbReference>
<dbReference type="CDD" id="cd17928">
    <property type="entry name" value="DEXDc_SecA"/>
    <property type="match status" value="1"/>
</dbReference>
<dbReference type="CDD" id="cd18803">
    <property type="entry name" value="SF2_C_secA"/>
    <property type="match status" value="1"/>
</dbReference>
<dbReference type="FunFam" id="3.40.50.300:FF:000113">
    <property type="entry name" value="Preprotein translocase subunit SecA"/>
    <property type="match status" value="1"/>
</dbReference>
<dbReference type="FunFam" id="3.90.1440.10:FF:000001">
    <property type="entry name" value="Preprotein translocase subunit SecA"/>
    <property type="match status" value="1"/>
</dbReference>
<dbReference type="FunFam" id="1.10.3060.10:FF:000003">
    <property type="entry name" value="Protein translocase subunit SecA"/>
    <property type="match status" value="1"/>
</dbReference>
<dbReference type="FunFam" id="3.40.50.300:FF:000334">
    <property type="entry name" value="Protein translocase subunit SecA"/>
    <property type="match status" value="1"/>
</dbReference>
<dbReference type="Gene3D" id="1.10.3060.10">
    <property type="entry name" value="Helical scaffold and wing domains of SecA"/>
    <property type="match status" value="1"/>
</dbReference>
<dbReference type="Gene3D" id="3.40.50.300">
    <property type="entry name" value="P-loop containing nucleotide triphosphate hydrolases"/>
    <property type="match status" value="2"/>
</dbReference>
<dbReference type="Gene3D" id="3.90.1440.10">
    <property type="entry name" value="SecA, preprotein cross-linking domain"/>
    <property type="match status" value="1"/>
</dbReference>
<dbReference type="HAMAP" id="MF_01382">
    <property type="entry name" value="SecA"/>
    <property type="match status" value="1"/>
</dbReference>
<dbReference type="InterPro" id="IPR014001">
    <property type="entry name" value="Helicase_ATP-bd"/>
</dbReference>
<dbReference type="InterPro" id="IPR001650">
    <property type="entry name" value="Helicase_C-like"/>
</dbReference>
<dbReference type="InterPro" id="IPR027417">
    <property type="entry name" value="P-loop_NTPase"/>
</dbReference>
<dbReference type="InterPro" id="IPR004027">
    <property type="entry name" value="SEC_C_motif"/>
</dbReference>
<dbReference type="InterPro" id="IPR000185">
    <property type="entry name" value="SecA"/>
</dbReference>
<dbReference type="InterPro" id="IPR020937">
    <property type="entry name" value="SecA_CS"/>
</dbReference>
<dbReference type="InterPro" id="IPR011115">
    <property type="entry name" value="SecA_DEAD"/>
</dbReference>
<dbReference type="InterPro" id="IPR014018">
    <property type="entry name" value="SecA_motor_DEAD"/>
</dbReference>
<dbReference type="InterPro" id="IPR011130">
    <property type="entry name" value="SecA_preprotein_X-link_dom"/>
</dbReference>
<dbReference type="InterPro" id="IPR044722">
    <property type="entry name" value="SecA_SF2_C"/>
</dbReference>
<dbReference type="InterPro" id="IPR011116">
    <property type="entry name" value="SecA_Wing/Scaffold"/>
</dbReference>
<dbReference type="InterPro" id="IPR036266">
    <property type="entry name" value="SecA_Wing/Scaffold_sf"/>
</dbReference>
<dbReference type="InterPro" id="IPR036670">
    <property type="entry name" value="SecA_X-link_sf"/>
</dbReference>
<dbReference type="NCBIfam" id="NF009538">
    <property type="entry name" value="PRK12904.1"/>
    <property type="match status" value="1"/>
</dbReference>
<dbReference type="NCBIfam" id="TIGR00963">
    <property type="entry name" value="secA"/>
    <property type="match status" value="1"/>
</dbReference>
<dbReference type="PANTHER" id="PTHR30612:SF0">
    <property type="entry name" value="CHLOROPLAST PROTEIN-TRANSPORTING ATPASE"/>
    <property type="match status" value="1"/>
</dbReference>
<dbReference type="PANTHER" id="PTHR30612">
    <property type="entry name" value="SECA INNER MEMBRANE COMPONENT OF SEC PROTEIN SECRETION SYSTEM"/>
    <property type="match status" value="1"/>
</dbReference>
<dbReference type="Pfam" id="PF21090">
    <property type="entry name" value="P-loop_SecA"/>
    <property type="match status" value="1"/>
</dbReference>
<dbReference type="Pfam" id="PF02810">
    <property type="entry name" value="SEC-C"/>
    <property type="match status" value="1"/>
</dbReference>
<dbReference type="Pfam" id="PF07517">
    <property type="entry name" value="SecA_DEAD"/>
    <property type="match status" value="1"/>
</dbReference>
<dbReference type="Pfam" id="PF01043">
    <property type="entry name" value="SecA_PP_bind"/>
    <property type="match status" value="1"/>
</dbReference>
<dbReference type="Pfam" id="PF07516">
    <property type="entry name" value="SecA_SW"/>
    <property type="match status" value="1"/>
</dbReference>
<dbReference type="PRINTS" id="PR00906">
    <property type="entry name" value="SECA"/>
</dbReference>
<dbReference type="SMART" id="SM00957">
    <property type="entry name" value="SecA_DEAD"/>
    <property type="match status" value="1"/>
</dbReference>
<dbReference type="SMART" id="SM00958">
    <property type="entry name" value="SecA_PP_bind"/>
    <property type="match status" value="1"/>
</dbReference>
<dbReference type="SUPFAM" id="SSF81886">
    <property type="entry name" value="Helical scaffold and wing domains of SecA"/>
    <property type="match status" value="1"/>
</dbReference>
<dbReference type="SUPFAM" id="SSF52540">
    <property type="entry name" value="P-loop containing nucleoside triphosphate hydrolases"/>
    <property type="match status" value="2"/>
</dbReference>
<dbReference type="SUPFAM" id="SSF81767">
    <property type="entry name" value="Pre-protein crosslinking domain of SecA"/>
    <property type="match status" value="1"/>
</dbReference>
<dbReference type="PROSITE" id="PS01312">
    <property type="entry name" value="SECA"/>
    <property type="match status" value="1"/>
</dbReference>
<dbReference type="PROSITE" id="PS51196">
    <property type="entry name" value="SECA_MOTOR_DEAD"/>
    <property type="match status" value="1"/>
</dbReference>
<accession>Q5WW88</accession>
<comment type="function">
    <text evidence="1">Part of the Sec protein translocase complex. Interacts with the SecYEG preprotein conducting channel. Has a central role in coupling the hydrolysis of ATP to the transfer of proteins into and across the cell membrane, serving both as a receptor for the preprotein-SecB complex and as an ATP-driven molecular motor driving the stepwise translocation of polypeptide chains across the membrane.</text>
</comment>
<comment type="catalytic activity">
    <reaction evidence="1">
        <text>ATP + H2O + cellular proteinSide 1 = ADP + phosphate + cellular proteinSide 2.</text>
        <dbReference type="EC" id="7.4.2.8"/>
    </reaction>
</comment>
<comment type="cofactor">
    <cofactor evidence="1">
        <name>Zn(2+)</name>
        <dbReference type="ChEBI" id="CHEBI:29105"/>
    </cofactor>
    <text evidence="1">May bind 1 zinc ion per subunit.</text>
</comment>
<comment type="subunit">
    <text evidence="1">Monomer and homodimer. Part of the essential Sec protein translocation apparatus which comprises SecA, SecYEG and auxiliary proteins SecDF-YajC and YidC.</text>
</comment>
<comment type="subcellular location">
    <subcellularLocation>
        <location evidence="1">Cell inner membrane</location>
        <topology evidence="1">Peripheral membrane protein</topology>
        <orientation evidence="1">Cytoplasmic side</orientation>
    </subcellularLocation>
    <subcellularLocation>
        <location evidence="1">Cytoplasm</location>
    </subcellularLocation>
    <text evidence="1">Distribution is 50-50.</text>
</comment>
<comment type="similarity">
    <text evidence="1">Belongs to the SecA family.</text>
</comment>
<keyword id="KW-0067">ATP-binding</keyword>
<keyword id="KW-0997">Cell inner membrane</keyword>
<keyword id="KW-1003">Cell membrane</keyword>
<keyword id="KW-0963">Cytoplasm</keyword>
<keyword id="KW-0472">Membrane</keyword>
<keyword id="KW-0479">Metal-binding</keyword>
<keyword id="KW-0547">Nucleotide-binding</keyword>
<keyword id="KW-0653">Protein transport</keyword>
<keyword id="KW-1278">Translocase</keyword>
<keyword id="KW-0811">Translocation</keyword>
<keyword id="KW-0813">Transport</keyword>
<keyword id="KW-0862">Zinc</keyword>
<proteinExistence type="inferred from homology"/>
<reference key="1">
    <citation type="journal article" date="2004" name="Nat. Genet.">
        <title>Evidence in the Legionella pneumophila genome for exploitation of host cell functions and high genome plasticity.</title>
        <authorList>
            <person name="Cazalet C."/>
            <person name="Rusniok C."/>
            <person name="Brueggemann H."/>
            <person name="Zidane N."/>
            <person name="Magnier A."/>
            <person name="Ma L."/>
            <person name="Tichit M."/>
            <person name="Jarraud S."/>
            <person name="Bouchier C."/>
            <person name="Vandenesch F."/>
            <person name="Kunst F."/>
            <person name="Etienne J."/>
            <person name="Glaser P."/>
            <person name="Buchrieser C."/>
        </authorList>
    </citation>
    <scope>NUCLEOTIDE SEQUENCE [LARGE SCALE GENOMIC DNA]</scope>
    <source>
        <strain>Lens</strain>
    </source>
</reference>
<gene>
    <name evidence="1" type="primary">secA</name>
    <name type="ordered locus">lpl1565</name>
</gene>
<feature type="chain" id="PRO_0000320840" description="Protein translocase subunit SecA">
    <location>
        <begin position="1"/>
        <end position="896"/>
    </location>
</feature>
<feature type="region of interest" description="Disordered" evidence="2">
    <location>
        <begin position="855"/>
        <end position="879"/>
    </location>
</feature>
<feature type="compositionally biased region" description="Basic and acidic residues" evidence="2">
    <location>
        <begin position="866"/>
        <end position="876"/>
    </location>
</feature>
<feature type="binding site" evidence="1">
    <location>
        <position position="87"/>
    </location>
    <ligand>
        <name>ATP</name>
        <dbReference type="ChEBI" id="CHEBI:30616"/>
    </ligand>
</feature>
<feature type="binding site" evidence="1">
    <location>
        <begin position="105"/>
        <end position="109"/>
    </location>
    <ligand>
        <name>ATP</name>
        <dbReference type="ChEBI" id="CHEBI:30616"/>
    </ligand>
</feature>
<feature type="binding site" evidence="1">
    <location>
        <position position="507"/>
    </location>
    <ligand>
        <name>ATP</name>
        <dbReference type="ChEBI" id="CHEBI:30616"/>
    </ligand>
</feature>
<feature type="binding site" evidence="1">
    <location>
        <position position="880"/>
    </location>
    <ligand>
        <name>Zn(2+)</name>
        <dbReference type="ChEBI" id="CHEBI:29105"/>
    </ligand>
</feature>
<feature type="binding site" evidence="1">
    <location>
        <position position="882"/>
    </location>
    <ligand>
        <name>Zn(2+)</name>
        <dbReference type="ChEBI" id="CHEBI:29105"/>
    </ligand>
</feature>
<feature type="binding site" evidence="1">
    <location>
        <position position="891"/>
    </location>
    <ligand>
        <name>Zn(2+)</name>
        <dbReference type="ChEBI" id="CHEBI:29105"/>
    </ligand>
</feature>
<feature type="binding site" evidence="1">
    <location>
        <position position="892"/>
    </location>
    <ligand>
        <name>Zn(2+)</name>
        <dbReference type="ChEBI" id="CHEBI:29105"/>
    </ligand>
</feature>
<sequence>MLSTLIKKMFGSRNERTLRRMEKSVMAINAFEPKMQALSNEELAGKTQEFKERFNNGESLDELLAEAFATVREVSLRTLGLRHFDVQLIGGMVLHEGNIAEMRTGEGKTLVATLPAYLNAISGRGVHIVTVNDYLAKRDSQWMKPIYEFLGLTVGVIYPDMSHKEKQEAYKADIVYGTNNEYGFDYLRDNMAFSLTDKVQRELNFAIVDEVDSILIDEARTPLIISGAAEDSSELYIKINSLIPQLKKQEEEGDEGDYTIDEKQKQAHLTDAGHLHIEELLTKAKLLDPGESLYHASNIMLMHHVNAALKAHAMFHRDIDYIVKDNQVVIVDEHTGRTMPGRRWSEGLHQAVEAKEGVSIQNENQTLASITFQNFFRMYNKLSGMTGTADTEAYEFQQIYNLEVVVIPTNRSMIRKDEADLVYLTQADKFQAIIEDVRECGVRRQPVLVGTVSIEASEFLSQLLKKENIKHQVLNAKFHEKEAQIIAEAGRPGAVTIATNMAGRGTDIVLGGSLAADLANLPADASEQEKEVVKKEWQKRHDEVIAAGGLRIIGSERHESRRIDNQLRGRAGRQGDPGSSRFYLSLEDNLMRIFASERVGSMMRRLGMQPGEPIEHSLVTRAIENAQRKLEGHHFDVRKQLLDYDNVANDQRQVIYTQRSSIMAMTDTQEVVEMMREEVMDSLVDTYIPPQSLEDQWDPQALSDVLSDEFKIKAPVPDWIDKDHSIQPEQIKEKILALAIEHYDEKVRKVGRPVISQFEKSIILQTLDNHWREHLAAMDQLRQGIHLRGYAQKDPKQEYKKEAFSLFTMMLDNLKYEVIRILSSVEIQTEEDAHVVEEQRRAEQIKKMNLMHENLSENDEASETQTFRRQEKKIGRNDPCPCGSGKKYKACHGSLV</sequence>
<protein>
    <recommendedName>
        <fullName evidence="1">Protein translocase subunit SecA</fullName>
        <ecNumber evidence="1">7.4.2.8</ecNumber>
    </recommendedName>
</protein>
<name>SECA_LEGPL</name>